<evidence type="ECO:0000255" key="1">
    <source>
        <dbReference type="HAMAP-Rule" id="MF_00318"/>
    </source>
</evidence>
<feature type="chain" id="PRO_0000267125" description="Enolase">
    <location>
        <begin position="1"/>
        <end position="432"/>
    </location>
</feature>
<feature type="active site" description="Proton donor" evidence="1">
    <location>
        <position position="206"/>
    </location>
</feature>
<feature type="active site" description="Proton acceptor" evidence="1">
    <location>
        <position position="336"/>
    </location>
</feature>
<feature type="binding site" evidence="1">
    <location>
        <position position="164"/>
    </location>
    <ligand>
        <name>(2R)-2-phosphoglycerate</name>
        <dbReference type="ChEBI" id="CHEBI:58289"/>
    </ligand>
</feature>
<feature type="binding site" evidence="1">
    <location>
        <position position="243"/>
    </location>
    <ligand>
        <name>Mg(2+)</name>
        <dbReference type="ChEBI" id="CHEBI:18420"/>
    </ligand>
</feature>
<feature type="binding site" evidence="1">
    <location>
        <position position="284"/>
    </location>
    <ligand>
        <name>Mg(2+)</name>
        <dbReference type="ChEBI" id="CHEBI:18420"/>
    </ligand>
</feature>
<feature type="binding site" evidence="1">
    <location>
        <position position="311"/>
    </location>
    <ligand>
        <name>Mg(2+)</name>
        <dbReference type="ChEBI" id="CHEBI:18420"/>
    </ligand>
</feature>
<feature type="binding site" evidence="1">
    <location>
        <position position="336"/>
    </location>
    <ligand>
        <name>(2R)-2-phosphoglycerate</name>
        <dbReference type="ChEBI" id="CHEBI:58289"/>
    </ligand>
</feature>
<feature type="binding site" evidence="1">
    <location>
        <position position="365"/>
    </location>
    <ligand>
        <name>(2R)-2-phosphoglycerate</name>
        <dbReference type="ChEBI" id="CHEBI:58289"/>
    </ligand>
</feature>
<feature type="binding site" evidence="1">
    <location>
        <position position="366"/>
    </location>
    <ligand>
        <name>(2R)-2-phosphoglycerate</name>
        <dbReference type="ChEBI" id="CHEBI:58289"/>
    </ligand>
</feature>
<feature type="binding site" evidence="1">
    <location>
        <position position="387"/>
    </location>
    <ligand>
        <name>(2R)-2-phosphoglycerate</name>
        <dbReference type="ChEBI" id="CHEBI:58289"/>
    </ligand>
</feature>
<proteinExistence type="inferred from homology"/>
<dbReference type="EC" id="4.2.1.11" evidence="1"/>
<dbReference type="EMBL" id="CP000239">
    <property type="protein sequence ID" value="ABD00674.1"/>
    <property type="molecule type" value="Genomic_DNA"/>
</dbReference>
<dbReference type="RefSeq" id="WP_011431347.1">
    <property type="nucleotide sequence ID" value="NC_007775.1"/>
</dbReference>
<dbReference type="SMR" id="Q2JRS2"/>
<dbReference type="STRING" id="321327.CYA_2554"/>
<dbReference type="KEGG" id="cya:CYA_2554"/>
<dbReference type="eggNOG" id="COG0148">
    <property type="taxonomic scope" value="Bacteria"/>
</dbReference>
<dbReference type="HOGENOM" id="CLU_031223_2_1_3"/>
<dbReference type="OrthoDB" id="9804716at2"/>
<dbReference type="UniPathway" id="UPA00109">
    <property type="reaction ID" value="UER00187"/>
</dbReference>
<dbReference type="Proteomes" id="UP000008818">
    <property type="component" value="Chromosome"/>
</dbReference>
<dbReference type="GO" id="GO:0009986">
    <property type="term" value="C:cell surface"/>
    <property type="evidence" value="ECO:0007669"/>
    <property type="project" value="UniProtKB-SubCell"/>
</dbReference>
<dbReference type="GO" id="GO:0005576">
    <property type="term" value="C:extracellular region"/>
    <property type="evidence" value="ECO:0007669"/>
    <property type="project" value="UniProtKB-SubCell"/>
</dbReference>
<dbReference type="GO" id="GO:0000015">
    <property type="term" value="C:phosphopyruvate hydratase complex"/>
    <property type="evidence" value="ECO:0007669"/>
    <property type="project" value="InterPro"/>
</dbReference>
<dbReference type="GO" id="GO:0000287">
    <property type="term" value="F:magnesium ion binding"/>
    <property type="evidence" value="ECO:0007669"/>
    <property type="project" value="UniProtKB-UniRule"/>
</dbReference>
<dbReference type="GO" id="GO:0004634">
    <property type="term" value="F:phosphopyruvate hydratase activity"/>
    <property type="evidence" value="ECO:0007669"/>
    <property type="project" value="UniProtKB-UniRule"/>
</dbReference>
<dbReference type="GO" id="GO:0006096">
    <property type="term" value="P:glycolytic process"/>
    <property type="evidence" value="ECO:0007669"/>
    <property type="project" value="UniProtKB-UniRule"/>
</dbReference>
<dbReference type="CDD" id="cd03313">
    <property type="entry name" value="enolase"/>
    <property type="match status" value="1"/>
</dbReference>
<dbReference type="FunFam" id="3.20.20.120:FF:000001">
    <property type="entry name" value="Enolase"/>
    <property type="match status" value="1"/>
</dbReference>
<dbReference type="Gene3D" id="3.20.20.120">
    <property type="entry name" value="Enolase-like C-terminal domain"/>
    <property type="match status" value="1"/>
</dbReference>
<dbReference type="Gene3D" id="3.30.390.10">
    <property type="entry name" value="Enolase-like, N-terminal domain"/>
    <property type="match status" value="1"/>
</dbReference>
<dbReference type="HAMAP" id="MF_00318">
    <property type="entry name" value="Enolase"/>
    <property type="match status" value="1"/>
</dbReference>
<dbReference type="InterPro" id="IPR000941">
    <property type="entry name" value="Enolase"/>
</dbReference>
<dbReference type="InterPro" id="IPR036849">
    <property type="entry name" value="Enolase-like_C_sf"/>
</dbReference>
<dbReference type="InterPro" id="IPR029017">
    <property type="entry name" value="Enolase-like_N"/>
</dbReference>
<dbReference type="InterPro" id="IPR020810">
    <property type="entry name" value="Enolase_C"/>
</dbReference>
<dbReference type="InterPro" id="IPR020809">
    <property type="entry name" value="Enolase_CS"/>
</dbReference>
<dbReference type="InterPro" id="IPR020811">
    <property type="entry name" value="Enolase_N"/>
</dbReference>
<dbReference type="NCBIfam" id="TIGR01060">
    <property type="entry name" value="eno"/>
    <property type="match status" value="1"/>
</dbReference>
<dbReference type="PANTHER" id="PTHR11902">
    <property type="entry name" value="ENOLASE"/>
    <property type="match status" value="1"/>
</dbReference>
<dbReference type="PANTHER" id="PTHR11902:SF1">
    <property type="entry name" value="ENOLASE"/>
    <property type="match status" value="1"/>
</dbReference>
<dbReference type="Pfam" id="PF00113">
    <property type="entry name" value="Enolase_C"/>
    <property type="match status" value="1"/>
</dbReference>
<dbReference type="Pfam" id="PF03952">
    <property type="entry name" value="Enolase_N"/>
    <property type="match status" value="1"/>
</dbReference>
<dbReference type="PIRSF" id="PIRSF001400">
    <property type="entry name" value="Enolase"/>
    <property type="match status" value="1"/>
</dbReference>
<dbReference type="PRINTS" id="PR00148">
    <property type="entry name" value="ENOLASE"/>
</dbReference>
<dbReference type="SFLD" id="SFLDF00002">
    <property type="entry name" value="enolase"/>
    <property type="match status" value="1"/>
</dbReference>
<dbReference type="SFLD" id="SFLDG00178">
    <property type="entry name" value="enolase"/>
    <property type="match status" value="1"/>
</dbReference>
<dbReference type="SMART" id="SM01192">
    <property type="entry name" value="Enolase_C"/>
    <property type="match status" value="1"/>
</dbReference>
<dbReference type="SMART" id="SM01193">
    <property type="entry name" value="Enolase_N"/>
    <property type="match status" value="1"/>
</dbReference>
<dbReference type="SUPFAM" id="SSF51604">
    <property type="entry name" value="Enolase C-terminal domain-like"/>
    <property type="match status" value="1"/>
</dbReference>
<dbReference type="SUPFAM" id="SSF54826">
    <property type="entry name" value="Enolase N-terminal domain-like"/>
    <property type="match status" value="1"/>
</dbReference>
<dbReference type="PROSITE" id="PS00164">
    <property type="entry name" value="ENOLASE"/>
    <property type="match status" value="1"/>
</dbReference>
<organism>
    <name type="scientific">Synechococcus sp. (strain JA-3-3Ab)</name>
    <name type="common">Cyanobacteria bacterium Yellowstone A-Prime</name>
    <dbReference type="NCBI Taxonomy" id="321327"/>
    <lineage>
        <taxon>Bacteria</taxon>
        <taxon>Bacillati</taxon>
        <taxon>Cyanobacteriota</taxon>
        <taxon>Cyanophyceae</taxon>
        <taxon>Synechococcales</taxon>
        <taxon>Synechococcaceae</taxon>
        <taxon>Synechococcus</taxon>
    </lineage>
</organism>
<gene>
    <name evidence="1" type="primary">eno</name>
    <name type="ordered locus">CYA_2554</name>
</gene>
<accession>Q2JRS2</accession>
<keyword id="KW-0963">Cytoplasm</keyword>
<keyword id="KW-0324">Glycolysis</keyword>
<keyword id="KW-0456">Lyase</keyword>
<keyword id="KW-0460">Magnesium</keyword>
<keyword id="KW-0479">Metal-binding</keyword>
<keyword id="KW-0964">Secreted</keyword>
<reference key="1">
    <citation type="journal article" date="2007" name="ISME J.">
        <title>Population level functional diversity in a microbial community revealed by comparative genomic and metagenomic analyses.</title>
        <authorList>
            <person name="Bhaya D."/>
            <person name="Grossman A.R."/>
            <person name="Steunou A.-S."/>
            <person name="Khuri N."/>
            <person name="Cohan F.M."/>
            <person name="Hamamura N."/>
            <person name="Melendrez M.C."/>
            <person name="Bateson M.M."/>
            <person name="Ward D.M."/>
            <person name="Heidelberg J.F."/>
        </authorList>
    </citation>
    <scope>NUCLEOTIDE SEQUENCE [LARGE SCALE GENOMIC DNA]</scope>
    <source>
        <strain>JA-3-3Ab</strain>
    </source>
</reference>
<comment type="function">
    <text evidence="1">Catalyzes the reversible conversion of 2-phosphoglycerate (2-PG) into phosphoenolpyruvate (PEP). It is essential for the degradation of carbohydrates via glycolysis.</text>
</comment>
<comment type="catalytic activity">
    <reaction evidence="1">
        <text>(2R)-2-phosphoglycerate = phosphoenolpyruvate + H2O</text>
        <dbReference type="Rhea" id="RHEA:10164"/>
        <dbReference type="ChEBI" id="CHEBI:15377"/>
        <dbReference type="ChEBI" id="CHEBI:58289"/>
        <dbReference type="ChEBI" id="CHEBI:58702"/>
        <dbReference type="EC" id="4.2.1.11"/>
    </reaction>
</comment>
<comment type="cofactor">
    <cofactor evidence="1">
        <name>Mg(2+)</name>
        <dbReference type="ChEBI" id="CHEBI:18420"/>
    </cofactor>
    <text evidence="1">Binds a second Mg(2+) ion via substrate during catalysis.</text>
</comment>
<comment type="pathway">
    <text evidence="1">Carbohydrate degradation; glycolysis; pyruvate from D-glyceraldehyde 3-phosphate: step 4/5.</text>
</comment>
<comment type="subcellular location">
    <subcellularLocation>
        <location evidence="1">Cytoplasm</location>
    </subcellularLocation>
    <subcellularLocation>
        <location evidence="1">Secreted</location>
    </subcellularLocation>
    <subcellularLocation>
        <location evidence="1">Cell surface</location>
    </subcellularLocation>
    <text evidence="1">Fractions of enolase are present in both the cytoplasm and on the cell surface.</text>
</comment>
<comment type="similarity">
    <text evidence="1">Belongs to the enolase family.</text>
</comment>
<name>ENO_SYNJA</name>
<sequence length="432" mass="45818">METAIEWITAHEILDSRGQPTLEALVGLANGATGLAQVPSGASTGTFEAHELRDGDPKRYGGKGVLRAVENILGPIQSELRGEDALNQARIDQLLIDLDGTPNKSQLGANAILAVSLATAKAAASAVGLPLYRYLGGPFANLLPAPLMNVLNGGAHADNNLDIQEFMIVPIGAPSFREALRYGAEVFAALKQVLRQRGLSTGVGDEGGFAPNLDSNAAALDLLMTAIEQAGYRPGEDIALALDVAANELLQDGQYHFEGKARSAEQMVNYYEQLLANYPILSLEDGLAEEDWAGWQAMTARLGSRVQLVGDDLFVTNPARLQKGIDSGAANAILIKLNQIGTLTETVSTIQLAVQAGFRTLISHRSGETEDTTIADLAVATRAGQIKTGSLCRSERIAKYNQLLRIEDELGEAAVYAGRVGLGPRGLPARSR</sequence>
<protein>
    <recommendedName>
        <fullName evidence="1">Enolase</fullName>
        <ecNumber evidence="1">4.2.1.11</ecNumber>
    </recommendedName>
    <alternativeName>
        <fullName evidence="1">2-phospho-D-glycerate hydro-lyase</fullName>
    </alternativeName>
    <alternativeName>
        <fullName evidence="1">2-phosphoglycerate dehydratase</fullName>
    </alternativeName>
</protein>